<proteinExistence type="inferred from homology"/>
<feature type="chain" id="PRO_0000317406" description="Putative purine permease 19">
    <location>
        <begin position="1"/>
        <end position="392"/>
    </location>
</feature>
<feature type="transmembrane region" description="Helical" evidence="2">
    <location>
        <begin position="46"/>
        <end position="66"/>
    </location>
</feature>
<feature type="transmembrane region" description="Helical" evidence="2">
    <location>
        <begin position="88"/>
        <end position="108"/>
    </location>
</feature>
<feature type="transmembrane region" description="Helical" evidence="2">
    <location>
        <begin position="128"/>
        <end position="148"/>
    </location>
</feature>
<feature type="transmembrane region" description="Helical" evidence="2">
    <location>
        <begin position="154"/>
        <end position="174"/>
    </location>
</feature>
<feature type="transmembrane region" description="Helical" evidence="2">
    <location>
        <begin position="182"/>
        <end position="202"/>
    </location>
</feature>
<feature type="transmembrane region" description="Helical" evidence="2">
    <location>
        <begin position="220"/>
        <end position="240"/>
    </location>
</feature>
<feature type="transmembrane region" description="Helical" evidence="2">
    <location>
        <begin position="254"/>
        <end position="274"/>
    </location>
</feature>
<feature type="transmembrane region" description="Helical" evidence="2">
    <location>
        <begin position="300"/>
        <end position="320"/>
    </location>
</feature>
<feature type="transmembrane region" description="Helical" evidence="2">
    <location>
        <begin position="325"/>
        <end position="345"/>
    </location>
</feature>
<feature type="transmembrane region" description="Helical" evidence="2">
    <location>
        <begin position="354"/>
        <end position="374"/>
    </location>
</feature>
<feature type="region of interest" description="Disordered" evidence="3">
    <location>
        <begin position="1"/>
        <end position="29"/>
    </location>
</feature>
<feature type="compositionally biased region" description="Basic and acidic residues" evidence="3">
    <location>
        <begin position="1"/>
        <end position="16"/>
    </location>
</feature>
<feature type="modified residue" description="Phosphoserine" evidence="1">
    <location>
        <position position="30"/>
    </location>
</feature>
<protein>
    <recommendedName>
        <fullName>Putative purine permease 19</fullName>
        <shortName>AtPUP19</shortName>
    </recommendedName>
</protein>
<accession>Q9SX93</accession>
<accession>F4HV17</accession>
<organism>
    <name type="scientific">Arabidopsis thaliana</name>
    <name type="common">Mouse-ear cress</name>
    <dbReference type="NCBI Taxonomy" id="3702"/>
    <lineage>
        <taxon>Eukaryota</taxon>
        <taxon>Viridiplantae</taxon>
        <taxon>Streptophyta</taxon>
        <taxon>Embryophyta</taxon>
        <taxon>Tracheophyta</taxon>
        <taxon>Spermatophyta</taxon>
        <taxon>Magnoliopsida</taxon>
        <taxon>eudicotyledons</taxon>
        <taxon>Gunneridae</taxon>
        <taxon>Pentapetalae</taxon>
        <taxon>rosids</taxon>
        <taxon>malvids</taxon>
        <taxon>Brassicales</taxon>
        <taxon>Brassicaceae</taxon>
        <taxon>Camelineae</taxon>
        <taxon>Arabidopsis</taxon>
    </lineage>
</organism>
<reference key="1">
    <citation type="journal article" date="2000" name="Nature">
        <title>Sequence and analysis of chromosome 1 of the plant Arabidopsis thaliana.</title>
        <authorList>
            <person name="Theologis A."/>
            <person name="Ecker J.R."/>
            <person name="Palm C.J."/>
            <person name="Federspiel N.A."/>
            <person name="Kaul S."/>
            <person name="White O."/>
            <person name="Alonso J."/>
            <person name="Altafi H."/>
            <person name="Araujo R."/>
            <person name="Bowman C.L."/>
            <person name="Brooks S.Y."/>
            <person name="Buehler E."/>
            <person name="Chan A."/>
            <person name="Chao Q."/>
            <person name="Chen H."/>
            <person name="Cheuk R.F."/>
            <person name="Chin C.W."/>
            <person name="Chung M.K."/>
            <person name="Conn L."/>
            <person name="Conway A.B."/>
            <person name="Conway A.R."/>
            <person name="Creasy T.H."/>
            <person name="Dewar K."/>
            <person name="Dunn P."/>
            <person name="Etgu P."/>
            <person name="Feldblyum T.V."/>
            <person name="Feng J.-D."/>
            <person name="Fong B."/>
            <person name="Fujii C.Y."/>
            <person name="Gill J.E."/>
            <person name="Goldsmith A.D."/>
            <person name="Haas B."/>
            <person name="Hansen N.F."/>
            <person name="Hughes B."/>
            <person name="Huizar L."/>
            <person name="Hunter J.L."/>
            <person name="Jenkins J."/>
            <person name="Johnson-Hopson C."/>
            <person name="Khan S."/>
            <person name="Khaykin E."/>
            <person name="Kim C.J."/>
            <person name="Koo H.L."/>
            <person name="Kremenetskaia I."/>
            <person name="Kurtz D.B."/>
            <person name="Kwan A."/>
            <person name="Lam B."/>
            <person name="Langin-Hooper S."/>
            <person name="Lee A."/>
            <person name="Lee J.M."/>
            <person name="Lenz C.A."/>
            <person name="Li J.H."/>
            <person name="Li Y.-P."/>
            <person name="Lin X."/>
            <person name="Liu S.X."/>
            <person name="Liu Z.A."/>
            <person name="Luros J.S."/>
            <person name="Maiti R."/>
            <person name="Marziali A."/>
            <person name="Militscher J."/>
            <person name="Miranda M."/>
            <person name="Nguyen M."/>
            <person name="Nierman W.C."/>
            <person name="Osborne B.I."/>
            <person name="Pai G."/>
            <person name="Peterson J."/>
            <person name="Pham P.K."/>
            <person name="Rizzo M."/>
            <person name="Rooney T."/>
            <person name="Rowley D."/>
            <person name="Sakano H."/>
            <person name="Salzberg S.L."/>
            <person name="Schwartz J.R."/>
            <person name="Shinn P."/>
            <person name="Southwick A.M."/>
            <person name="Sun H."/>
            <person name="Tallon L.J."/>
            <person name="Tambunga G."/>
            <person name="Toriumi M.J."/>
            <person name="Town C.D."/>
            <person name="Utterback T."/>
            <person name="Van Aken S."/>
            <person name="Vaysberg M."/>
            <person name="Vysotskaia V.S."/>
            <person name="Walker M."/>
            <person name="Wu D."/>
            <person name="Yu G."/>
            <person name="Fraser C.M."/>
            <person name="Venter J.C."/>
            <person name="Davis R.W."/>
        </authorList>
    </citation>
    <scope>NUCLEOTIDE SEQUENCE [LARGE SCALE GENOMIC DNA]</scope>
    <source>
        <strain>cv. Columbia</strain>
    </source>
</reference>
<reference key="2">
    <citation type="journal article" date="2017" name="Plant J.">
        <title>Araport11: a complete reannotation of the Arabidopsis thaliana reference genome.</title>
        <authorList>
            <person name="Cheng C.Y."/>
            <person name="Krishnakumar V."/>
            <person name="Chan A.P."/>
            <person name="Thibaud-Nissen F."/>
            <person name="Schobel S."/>
            <person name="Town C.D."/>
        </authorList>
    </citation>
    <scope>GENOME REANNOTATION</scope>
    <source>
        <strain>cv. Columbia</strain>
    </source>
</reference>
<reference key="3">
    <citation type="journal article" date="2000" name="Plant Cell">
        <title>A new family of high-affinity transporters for adenine, cytosine, and purine derivatives in Arabidopsis.</title>
        <authorList>
            <person name="Gillissen B."/>
            <person name="Buerkle L."/>
            <person name="Andre B."/>
            <person name="Kuehn C."/>
            <person name="Rentsch D."/>
            <person name="Brandl B."/>
            <person name="Frommer W.B."/>
        </authorList>
    </citation>
    <scope>GENE FAMILY</scope>
    <scope>NOMENCLATURE</scope>
</reference>
<name>PUP19_ARATH</name>
<comment type="subcellular location">
    <subcellularLocation>
        <location evidence="4">Membrane</location>
        <topology evidence="4">Multi-pass membrane protein</topology>
    </subcellularLocation>
</comment>
<comment type="similarity">
    <text evidence="4">Belongs to the purine permeases (TC 2.A.7.14) family.</text>
</comment>
<comment type="caution">
    <text evidence="4">The gene model predicted by TAIR differ by the presence of one additional Glu at the splice site.</text>
</comment>
<comment type="sequence caution" evidence="4">
    <conflict type="erroneous gene model prediction">
        <sequence resource="EMBL-CDS" id="AEE32193"/>
    </conflict>
</comment>
<evidence type="ECO:0000250" key="1">
    <source>
        <dbReference type="UniProtKB" id="Q9C508"/>
    </source>
</evidence>
<evidence type="ECO:0000255" key="2"/>
<evidence type="ECO:0000256" key="3">
    <source>
        <dbReference type="SAM" id="MobiDB-lite"/>
    </source>
</evidence>
<evidence type="ECO:0000305" key="4"/>
<sequence length="392" mass="43334">MGFHTKSPDRVTHEEEANIGVDNQPRETTSTSLNRSQIIKTRNWWICIFVCSCLVVAGRVLSTLLLNFYFIQTGRDVCDDPKQFKGTWLQSMVQNAAFPFTAFLLLLWRSSFSTHSETSSSSSSFGKLFLLYISLGVLFAAYSQLYAIGRTHCVFFLWIFTSQLIFTSIFTTIINKQKFNRWIILSMVLSGAATGLGITSSGGAYIPCENEGSKMSNGAWCAFFGTVAFSLSLCIMQLGFQKVIPTTQSRVSAVILMQTNASMIATLICLVGLFVSGEFKDIKEDFETFKKGKPLYVLSLIGLSLAWQVMSLGLVGLVCLASSLFSNVVSFCSTPLVNILLVLAFRFTDADVKFFKEGALVAGILGFASYVYSLYKSTKKKEIASQSQTTRV</sequence>
<keyword id="KW-0472">Membrane</keyword>
<keyword id="KW-0597">Phosphoprotein</keyword>
<keyword id="KW-1185">Reference proteome</keyword>
<keyword id="KW-0812">Transmembrane</keyword>
<keyword id="KW-1133">Transmembrane helix</keyword>
<keyword id="KW-0813">Transport</keyword>
<dbReference type="EMBL" id="AC007519">
    <property type="protein sequence ID" value="AAD46025.1"/>
    <property type="molecule type" value="Genomic_DNA"/>
</dbReference>
<dbReference type="EMBL" id="CP002684">
    <property type="protein sequence ID" value="AEE32193.1"/>
    <property type="status" value="ALT_SEQ"/>
    <property type="molecule type" value="Genomic_DNA"/>
</dbReference>
<dbReference type="PIR" id="H96516">
    <property type="entry name" value="H96516"/>
</dbReference>
<dbReference type="RefSeq" id="NP_001031153.1">
    <property type="nucleotide sequence ID" value="NM_001036076.2"/>
</dbReference>
<dbReference type="STRING" id="3702.Q9SX93"/>
<dbReference type="PaxDb" id="3702-AT1G47603.1"/>
<dbReference type="GeneID" id="3767386"/>
<dbReference type="KEGG" id="ath:AT1G47603"/>
<dbReference type="Araport" id="AT1G47603"/>
<dbReference type="TAIR" id="AT1G47603"/>
<dbReference type="eggNOG" id="ENOG502QRUH">
    <property type="taxonomic scope" value="Eukaryota"/>
</dbReference>
<dbReference type="HOGENOM" id="CLU_043459_2_1_1"/>
<dbReference type="InParanoid" id="Q9SX93"/>
<dbReference type="PhylomeDB" id="Q9SX93"/>
<dbReference type="PRO" id="PR:Q9SX93"/>
<dbReference type="Proteomes" id="UP000006548">
    <property type="component" value="Chromosome 1"/>
</dbReference>
<dbReference type="ExpressionAtlas" id="Q9SX93">
    <property type="expression patterns" value="baseline and differential"/>
</dbReference>
<dbReference type="GO" id="GO:0016020">
    <property type="term" value="C:membrane"/>
    <property type="evidence" value="ECO:0007669"/>
    <property type="project" value="UniProtKB-SubCell"/>
</dbReference>
<dbReference type="GO" id="GO:0005345">
    <property type="term" value="F:purine nucleobase transmembrane transporter activity"/>
    <property type="evidence" value="ECO:0007669"/>
    <property type="project" value="UniProtKB-ARBA"/>
</dbReference>
<dbReference type="GO" id="GO:0015211">
    <property type="term" value="F:purine nucleoside transmembrane transporter activity"/>
    <property type="evidence" value="ECO:0007669"/>
    <property type="project" value="InterPro"/>
</dbReference>
<dbReference type="InterPro" id="IPR030182">
    <property type="entry name" value="PUP_plant"/>
</dbReference>
<dbReference type="PANTHER" id="PTHR31376">
    <property type="entry name" value="OS09G0467300 PROTEIN-RELATED"/>
    <property type="match status" value="1"/>
</dbReference>
<dbReference type="PANTHER" id="PTHR31376:SF101">
    <property type="entry name" value="PURINE PERMEASE 19-RELATED"/>
    <property type="match status" value="1"/>
</dbReference>
<dbReference type="Pfam" id="PF16913">
    <property type="entry name" value="PUNUT"/>
    <property type="match status" value="1"/>
</dbReference>
<gene>
    <name type="primary">PUP19</name>
    <name type="ordered locus">At1g47603</name>
    <name type="ORF">F16N3.10</name>
</gene>